<keyword id="KW-0217">Developmental protein</keyword>
<keyword id="KW-1015">Disulfide bond</keyword>
<keyword id="KW-0272">Extracellular matrix</keyword>
<keyword id="KW-0325">Glycoprotein</keyword>
<keyword id="KW-0449">Lipoprotein</keyword>
<keyword id="KW-1185">Reference proteome</keyword>
<keyword id="KW-0964">Secreted</keyword>
<keyword id="KW-0732">Signal</keyword>
<keyword id="KW-0879">Wnt signaling pathway</keyword>
<protein>
    <recommendedName>
        <fullName>Protein Wnt-2</fullName>
    </recommendedName>
</protein>
<feature type="signal peptide" evidence="5">
    <location>
        <begin position="1"/>
        <end position="25"/>
    </location>
</feature>
<feature type="chain" id="PRO_0000229033" description="Protein Wnt-2">
    <location>
        <begin position="26"/>
        <end position="360"/>
    </location>
</feature>
<feature type="lipid moiety-binding region" description="O-palmitoleoyl serine; by PORCN" evidence="4">
    <location>
        <position position="212"/>
    </location>
</feature>
<feature type="glycosylation site" description="N-linked (GlcNAc...) asparagine" evidence="5">
    <location>
        <position position="295"/>
    </location>
</feature>
<feature type="disulfide bond" evidence="3">
    <location>
        <begin position="76"/>
        <end position="87"/>
    </location>
</feature>
<feature type="disulfide bond" evidence="3">
    <location>
        <begin position="127"/>
        <end position="135"/>
    </location>
</feature>
<feature type="disulfide bond" evidence="3">
    <location>
        <begin position="137"/>
        <end position="157"/>
    </location>
</feature>
<feature type="disulfide bond" evidence="3">
    <location>
        <begin position="206"/>
        <end position="220"/>
    </location>
</feature>
<feature type="disulfide bond" evidence="3">
    <location>
        <begin position="208"/>
        <end position="215"/>
    </location>
</feature>
<feature type="disulfide bond" evidence="3">
    <location>
        <begin position="278"/>
        <end position="309"/>
    </location>
</feature>
<feature type="disulfide bond" evidence="3">
    <location>
        <begin position="294"/>
        <end position="304"/>
    </location>
</feature>
<feature type="disulfide bond" evidence="3">
    <location>
        <begin position="308"/>
        <end position="348"/>
    </location>
</feature>
<feature type="disulfide bond" evidence="3">
    <location>
        <begin position="324"/>
        <end position="339"/>
    </location>
</feature>
<feature type="disulfide bond" evidence="3">
    <location>
        <begin position="326"/>
        <end position="336"/>
    </location>
</feature>
<feature type="disulfide bond" evidence="3">
    <location>
        <begin position="331"/>
        <end position="332"/>
    </location>
</feature>
<dbReference type="EMBL" id="DP000026">
    <property type="protein sequence ID" value="ABC87464.1"/>
    <property type="molecule type" value="Genomic_DNA"/>
</dbReference>
<dbReference type="RefSeq" id="NP_001162068.1">
    <property type="nucleotide sequence ID" value="NM_001168597.1"/>
</dbReference>
<dbReference type="SMR" id="Q2IBE2"/>
<dbReference type="FunCoup" id="Q2IBE2">
    <property type="interactions" value="401"/>
</dbReference>
<dbReference type="STRING" id="9601.ENSPPYP00000020115"/>
<dbReference type="GlyCosmos" id="Q2IBE2">
    <property type="glycosylation" value="1 site, No reported glycans"/>
</dbReference>
<dbReference type="Ensembl" id="ENSPPYT00000020907.3">
    <property type="protein sequence ID" value="ENSPPYP00000020115.2"/>
    <property type="gene ID" value="ENSPPYG00000017938.3"/>
</dbReference>
<dbReference type="GeneID" id="100137034"/>
<dbReference type="KEGG" id="pon:100137034"/>
<dbReference type="CTD" id="7472"/>
<dbReference type="eggNOG" id="KOG3913">
    <property type="taxonomic scope" value="Eukaryota"/>
</dbReference>
<dbReference type="GeneTree" id="ENSGT00940000159231"/>
<dbReference type="HOGENOM" id="CLU_033039_1_4_1"/>
<dbReference type="InParanoid" id="Q2IBE2"/>
<dbReference type="OMA" id="ITRMTKC"/>
<dbReference type="OrthoDB" id="5945655at2759"/>
<dbReference type="TreeFam" id="TF105310"/>
<dbReference type="Proteomes" id="UP000001595">
    <property type="component" value="Chromosome 7"/>
</dbReference>
<dbReference type="GO" id="GO:0005737">
    <property type="term" value="C:cytoplasm"/>
    <property type="evidence" value="ECO:0007669"/>
    <property type="project" value="Ensembl"/>
</dbReference>
<dbReference type="GO" id="GO:0005615">
    <property type="term" value="C:extracellular space"/>
    <property type="evidence" value="ECO:0007669"/>
    <property type="project" value="TreeGrafter"/>
</dbReference>
<dbReference type="GO" id="GO:0005125">
    <property type="term" value="F:cytokine activity"/>
    <property type="evidence" value="ECO:0007669"/>
    <property type="project" value="Ensembl"/>
</dbReference>
<dbReference type="GO" id="GO:0005109">
    <property type="term" value="F:frizzled binding"/>
    <property type="evidence" value="ECO:0007669"/>
    <property type="project" value="Ensembl"/>
</dbReference>
<dbReference type="GO" id="GO:0055009">
    <property type="term" value="P:atrial cardiac muscle tissue morphogenesis"/>
    <property type="evidence" value="ECO:0007669"/>
    <property type="project" value="Ensembl"/>
</dbReference>
<dbReference type="GO" id="GO:0060070">
    <property type="term" value="P:canonical Wnt signaling pathway"/>
    <property type="evidence" value="ECO:0007669"/>
    <property type="project" value="Ensembl"/>
</dbReference>
<dbReference type="GO" id="GO:0060317">
    <property type="term" value="P:cardiac epithelial to mesenchymal transition"/>
    <property type="evidence" value="ECO:0007669"/>
    <property type="project" value="Ensembl"/>
</dbReference>
<dbReference type="GO" id="GO:0060038">
    <property type="term" value="P:cardiac muscle cell proliferation"/>
    <property type="evidence" value="ECO:0007669"/>
    <property type="project" value="Ensembl"/>
</dbReference>
<dbReference type="GO" id="GO:0045165">
    <property type="term" value="P:cell fate commitment"/>
    <property type="evidence" value="ECO:0007669"/>
    <property type="project" value="TreeGrafter"/>
</dbReference>
<dbReference type="GO" id="GO:0033278">
    <property type="term" value="P:cell proliferation in midbrain"/>
    <property type="evidence" value="ECO:0007669"/>
    <property type="project" value="Ensembl"/>
</dbReference>
<dbReference type="GO" id="GO:0007267">
    <property type="term" value="P:cell-cell signaling"/>
    <property type="evidence" value="ECO:0007669"/>
    <property type="project" value="Ensembl"/>
</dbReference>
<dbReference type="GO" id="GO:0071560">
    <property type="term" value="P:cellular response to transforming growth factor beta stimulus"/>
    <property type="evidence" value="ECO:0007669"/>
    <property type="project" value="Ensembl"/>
</dbReference>
<dbReference type="GO" id="GO:0060502">
    <property type="term" value="P:epithelial cell proliferation involved in lung morphogenesis"/>
    <property type="evidence" value="ECO:0007669"/>
    <property type="project" value="Ensembl"/>
</dbReference>
<dbReference type="GO" id="GO:0060716">
    <property type="term" value="P:labyrinthine layer blood vessel development"/>
    <property type="evidence" value="ECO:0007669"/>
    <property type="project" value="Ensembl"/>
</dbReference>
<dbReference type="GO" id="GO:0060492">
    <property type="term" value="P:lung induction"/>
    <property type="evidence" value="ECO:0007669"/>
    <property type="project" value="Ensembl"/>
</dbReference>
<dbReference type="GO" id="GO:0061180">
    <property type="term" value="P:mammary gland epithelium development"/>
    <property type="evidence" value="ECO:0007669"/>
    <property type="project" value="Ensembl"/>
</dbReference>
<dbReference type="GO" id="GO:0010463">
    <property type="term" value="P:mesenchymal cell proliferation"/>
    <property type="evidence" value="ECO:0007669"/>
    <property type="project" value="Ensembl"/>
</dbReference>
<dbReference type="GO" id="GO:1904948">
    <property type="term" value="P:midbrain dopaminergic neuron differentiation"/>
    <property type="evidence" value="ECO:0007669"/>
    <property type="project" value="Ensembl"/>
</dbReference>
<dbReference type="GO" id="GO:0060045">
    <property type="term" value="P:positive regulation of cardiac muscle cell proliferation"/>
    <property type="evidence" value="ECO:0007669"/>
    <property type="project" value="Ensembl"/>
</dbReference>
<dbReference type="GO" id="GO:0060501">
    <property type="term" value="P:positive regulation of epithelial cell proliferation involved in lung morphogenesis"/>
    <property type="evidence" value="ECO:0007669"/>
    <property type="project" value="Ensembl"/>
</dbReference>
<dbReference type="GO" id="GO:0048146">
    <property type="term" value="P:positive regulation of fibroblast proliferation"/>
    <property type="evidence" value="ECO:0007669"/>
    <property type="project" value="Ensembl"/>
</dbReference>
<dbReference type="GO" id="GO:0002053">
    <property type="term" value="P:positive regulation of mesenchymal cell proliferation"/>
    <property type="evidence" value="ECO:0007669"/>
    <property type="project" value="Ensembl"/>
</dbReference>
<dbReference type="GO" id="GO:0050769">
    <property type="term" value="P:positive regulation of neurogenesis"/>
    <property type="evidence" value="ECO:0007669"/>
    <property type="project" value="Ensembl"/>
</dbReference>
<dbReference type="GO" id="GO:0045944">
    <property type="term" value="P:positive regulation of transcription by RNA polymerase II"/>
    <property type="evidence" value="ECO:0007669"/>
    <property type="project" value="Ensembl"/>
</dbReference>
<dbReference type="CDD" id="cd19345">
    <property type="entry name" value="Wnt_Wnt2"/>
    <property type="match status" value="1"/>
</dbReference>
<dbReference type="FunFam" id="3.30.2460.20:FF:000001">
    <property type="entry name" value="Wnt homolog"/>
    <property type="match status" value="1"/>
</dbReference>
<dbReference type="Gene3D" id="3.30.2460.20">
    <property type="match status" value="1"/>
</dbReference>
<dbReference type="InterPro" id="IPR005817">
    <property type="entry name" value="Wnt"/>
</dbReference>
<dbReference type="InterPro" id="IPR009140">
    <property type="entry name" value="Wnt2"/>
</dbReference>
<dbReference type="InterPro" id="IPR043158">
    <property type="entry name" value="Wnt_C"/>
</dbReference>
<dbReference type="InterPro" id="IPR018161">
    <property type="entry name" value="Wnt_CS"/>
</dbReference>
<dbReference type="PANTHER" id="PTHR12027:SF86">
    <property type="entry name" value="PROTEIN WNT-2"/>
    <property type="match status" value="1"/>
</dbReference>
<dbReference type="PANTHER" id="PTHR12027">
    <property type="entry name" value="WNT RELATED"/>
    <property type="match status" value="1"/>
</dbReference>
<dbReference type="Pfam" id="PF00110">
    <property type="entry name" value="wnt"/>
    <property type="match status" value="1"/>
</dbReference>
<dbReference type="PRINTS" id="PR01842">
    <property type="entry name" value="WNT2PROTEIN"/>
</dbReference>
<dbReference type="PRINTS" id="PR01349">
    <property type="entry name" value="WNTPROTEIN"/>
</dbReference>
<dbReference type="SMART" id="SM00097">
    <property type="entry name" value="WNT1"/>
    <property type="match status" value="1"/>
</dbReference>
<dbReference type="PROSITE" id="PS00246">
    <property type="entry name" value="WNT1"/>
    <property type="match status" value="1"/>
</dbReference>
<comment type="function">
    <text evidence="1 2">Ligand for members of the frizzled family of seven transmembrane receptors. Functions in the canonical Wnt signaling pathway that results in activation of transcription factors of the TCF/LEF family (By similarity). Functions as a upstream regulator of FGF10 expression. Plays an important role in embryonic lung development. May contribute to embryonic brain development by regulating the proliferation of dopaminergic precursors and neurons (By similarity).</text>
</comment>
<comment type="subcellular location">
    <subcellularLocation>
        <location evidence="1">Secreted</location>
        <location evidence="1">Extracellular space</location>
        <location evidence="1">Extracellular matrix</location>
    </subcellularLocation>
    <subcellularLocation>
        <location evidence="1">Secreted</location>
    </subcellularLocation>
</comment>
<comment type="PTM">
    <text evidence="1">Palmitoleoylation is required for efficient binding to frizzled receptors. Depalmitoleoylation leads to Wnt signaling pathway inhibition.</text>
</comment>
<comment type="similarity">
    <text evidence="6">Belongs to the Wnt family.</text>
</comment>
<gene>
    <name type="primary">WNT2</name>
</gene>
<name>WNT2_PONAB</name>
<accession>Q2IBE2</accession>
<proteinExistence type="inferred from homology"/>
<reference key="1">
    <citation type="submission" date="2006-01" db="EMBL/GenBank/DDBJ databases">
        <title>NISC comparative sequencing initiative.</title>
        <authorList>
            <person name="Antonellis A."/>
            <person name="Ayele K."/>
            <person name="Benjamin B."/>
            <person name="Blakesley R.W."/>
            <person name="Boakye A."/>
            <person name="Bouffard G.G."/>
            <person name="Brinkley C."/>
            <person name="Brooks S."/>
            <person name="Chu G."/>
            <person name="Coleman H."/>
            <person name="Engle J."/>
            <person name="Gestole M."/>
            <person name="Greene A."/>
            <person name="Guan X."/>
            <person name="Gupta J."/>
            <person name="Haghighi P."/>
            <person name="Han J."/>
            <person name="Hansen N."/>
            <person name="Ho S.-L."/>
            <person name="Hu P."/>
            <person name="Hunter G."/>
            <person name="Hurle B."/>
            <person name="Idol J.R."/>
            <person name="Kwong P."/>
            <person name="Laric P."/>
            <person name="Larson S."/>
            <person name="Lee-Lin S.-Q."/>
            <person name="Legaspi R."/>
            <person name="Madden M."/>
            <person name="Maduro Q.L."/>
            <person name="Maduro V.B."/>
            <person name="Margulies E.H."/>
            <person name="Masiello C."/>
            <person name="Maskeri B."/>
            <person name="McDowell J."/>
            <person name="Mojidi H.A."/>
            <person name="Mullikin J.C."/>
            <person name="Oestreicher J.S."/>
            <person name="Park M."/>
            <person name="Portnoy M.E."/>
            <person name="Prasad A."/>
            <person name="Puri O."/>
            <person name="Reddix-Dugue N."/>
            <person name="Schandler K."/>
            <person name="Schueler M.G."/>
            <person name="Sison C."/>
            <person name="Stantripop S."/>
            <person name="Stephen E."/>
            <person name="Taye A."/>
            <person name="Thomas J.W."/>
            <person name="Thomas P.J."/>
            <person name="Tsipouri V."/>
            <person name="Ung L."/>
            <person name="Vogt J.L."/>
            <person name="Wetherby K.D."/>
            <person name="Young A."/>
            <person name="Green E.D."/>
        </authorList>
    </citation>
    <scope>NUCLEOTIDE SEQUENCE [LARGE SCALE GENOMIC DNA]</scope>
</reference>
<organism>
    <name type="scientific">Pongo abelii</name>
    <name type="common">Sumatran orangutan</name>
    <name type="synonym">Pongo pygmaeus abelii</name>
    <dbReference type="NCBI Taxonomy" id="9601"/>
    <lineage>
        <taxon>Eukaryota</taxon>
        <taxon>Metazoa</taxon>
        <taxon>Chordata</taxon>
        <taxon>Craniata</taxon>
        <taxon>Vertebrata</taxon>
        <taxon>Euteleostomi</taxon>
        <taxon>Mammalia</taxon>
        <taxon>Eutheria</taxon>
        <taxon>Euarchontoglires</taxon>
        <taxon>Primates</taxon>
        <taxon>Haplorrhini</taxon>
        <taxon>Catarrhini</taxon>
        <taxon>Hominidae</taxon>
        <taxon>Pongo</taxon>
    </lineage>
</organism>
<evidence type="ECO:0000250" key="1">
    <source>
        <dbReference type="UniProtKB" id="P09544"/>
    </source>
</evidence>
<evidence type="ECO:0000250" key="2">
    <source>
        <dbReference type="UniProtKB" id="P21552"/>
    </source>
</evidence>
<evidence type="ECO:0000250" key="3">
    <source>
        <dbReference type="UniProtKB" id="P28026"/>
    </source>
</evidence>
<evidence type="ECO:0000250" key="4">
    <source>
        <dbReference type="UniProtKB" id="P56704"/>
    </source>
</evidence>
<evidence type="ECO:0000255" key="5"/>
<evidence type="ECO:0000305" key="6"/>
<sequence>MNAPLGGIWLWLPLLLTWLTPEVNSSWWYMRATGGSSRVMCDNVPGLVSSQRQLCHRHPDVMRAISQGVAEWTAECQHQFRQHRWNCNTLDRDHSLFGRVLLRSSRESAFVYAISSAGVVFAITRACSQGEVKSCSCDPKKMGSAKDSKGIFDWGGCSDNIDYGIKFARAFVDAKERKGKDARALMNLHNNRAGRKAVKRFLKQECKCHGVSGSCTLRTCWLAMADFRKTGDYLWRKYNGAIQVVMNQDGTGFTVANERFKKPTKNDLVYFENSPDYCIRDREAGSLGTAGRVCNLTSRGMDSCEVMCCGRGYDTSHVTRMTKCGCKFHWCCAVRCQDCLEALDVHTCKAPKNADWTTPT</sequence>